<protein>
    <recommendedName>
        <fullName evidence="1">4-hydroxybenzoate octaprenyltransferase</fullName>
        <ecNumber evidence="1">2.5.1.39</ecNumber>
    </recommendedName>
    <alternativeName>
        <fullName evidence="1">4-HB polyprenyltransferase</fullName>
    </alternativeName>
</protein>
<accession>A4G1Y9</accession>
<evidence type="ECO:0000255" key="1">
    <source>
        <dbReference type="HAMAP-Rule" id="MF_01635"/>
    </source>
</evidence>
<organism>
    <name type="scientific">Herminiimonas arsenicoxydans</name>
    <dbReference type="NCBI Taxonomy" id="204773"/>
    <lineage>
        <taxon>Bacteria</taxon>
        <taxon>Pseudomonadati</taxon>
        <taxon>Pseudomonadota</taxon>
        <taxon>Betaproteobacteria</taxon>
        <taxon>Burkholderiales</taxon>
        <taxon>Oxalobacteraceae</taxon>
        <taxon>Herminiimonas</taxon>
    </lineage>
</organism>
<comment type="function">
    <text evidence="1">Catalyzes the prenylation of para-hydroxybenzoate (PHB) with an all-trans polyprenyl group. Mediates the second step in the final reaction sequence of ubiquinone-8 (UQ-8) biosynthesis, which is the condensation of the polyisoprenoid side chain with PHB, generating the first membrane-bound Q intermediate 3-octaprenyl-4-hydroxybenzoate.</text>
</comment>
<comment type="catalytic activity">
    <reaction evidence="1">
        <text>all-trans-octaprenyl diphosphate + 4-hydroxybenzoate = 4-hydroxy-3-(all-trans-octaprenyl)benzoate + diphosphate</text>
        <dbReference type="Rhea" id="RHEA:27782"/>
        <dbReference type="ChEBI" id="CHEBI:1617"/>
        <dbReference type="ChEBI" id="CHEBI:17879"/>
        <dbReference type="ChEBI" id="CHEBI:33019"/>
        <dbReference type="ChEBI" id="CHEBI:57711"/>
        <dbReference type="EC" id="2.5.1.39"/>
    </reaction>
</comment>
<comment type="cofactor">
    <cofactor evidence="1">
        <name>Mg(2+)</name>
        <dbReference type="ChEBI" id="CHEBI:18420"/>
    </cofactor>
</comment>
<comment type="pathway">
    <text evidence="1">Cofactor biosynthesis; ubiquinone biosynthesis.</text>
</comment>
<comment type="subcellular location">
    <subcellularLocation>
        <location evidence="1">Cell inner membrane</location>
        <topology evidence="1">Multi-pass membrane protein</topology>
    </subcellularLocation>
</comment>
<comment type="similarity">
    <text evidence="1">Belongs to the UbiA prenyltransferase family.</text>
</comment>
<sequence length="284" mass="31797">MNRLQLYFRLVRLNKPIGILLLLWPTLWALWLASDGKPDWTLLAIFTLGTILMRSAGCAINDYADRDFDKYVQRTVDRPVTSGKIQPREALLVALALALLSFALIWPLNTLTKQLSIAAVIIAGTYPYFKRFFAIPQAYLGIAFGFGIPMGFAAVQNTVPAAAWWLLVANVFWAVAYDTEYAMVDREDDLKLGMKTSAITFGRHDVAAVMFCYAVTLGLIFIVGWQYGLRTWFAAGMLIATGCAIYHYTLIRARERAGCFAAFRHNNWLGAAIFGGVVLDYLIR</sequence>
<reference key="1">
    <citation type="journal article" date="2007" name="PLoS Genet.">
        <title>A tale of two oxidation states: bacterial colonization of arsenic-rich environments.</title>
        <authorList>
            <person name="Muller D."/>
            <person name="Medigue C."/>
            <person name="Koechler S."/>
            <person name="Barbe V."/>
            <person name="Barakat M."/>
            <person name="Talla E."/>
            <person name="Bonnefoy V."/>
            <person name="Krin E."/>
            <person name="Arsene-Ploetze F."/>
            <person name="Carapito C."/>
            <person name="Chandler M."/>
            <person name="Cournoyer B."/>
            <person name="Cruveiller S."/>
            <person name="Dossat C."/>
            <person name="Duval S."/>
            <person name="Heymann M."/>
            <person name="Leize E."/>
            <person name="Lieutaud A."/>
            <person name="Lievremont D."/>
            <person name="Makita Y."/>
            <person name="Mangenot S."/>
            <person name="Nitschke W."/>
            <person name="Ortet P."/>
            <person name="Perdrial N."/>
            <person name="Schoepp B."/>
            <person name="Siguier P."/>
            <person name="Simeonova D.D."/>
            <person name="Rouy Z."/>
            <person name="Segurens B."/>
            <person name="Turlin E."/>
            <person name="Vallenet D."/>
            <person name="van Dorsselaer A."/>
            <person name="Weiss S."/>
            <person name="Weissenbach J."/>
            <person name="Lett M.-C."/>
            <person name="Danchin A."/>
            <person name="Bertin P.N."/>
        </authorList>
    </citation>
    <scope>NUCLEOTIDE SEQUENCE [LARGE SCALE GENOMIC DNA]</scope>
    <source>
        <strain>ULPAs1</strain>
    </source>
</reference>
<keyword id="KW-0997">Cell inner membrane</keyword>
<keyword id="KW-1003">Cell membrane</keyword>
<keyword id="KW-0460">Magnesium</keyword>
<keyword id="KW-0472">Membrane</keyword>
<keyword id="KW-1185">Reference proteome</keyword>
<keyword id="KW-0808">Transferase</keyword>
<keyword id="KW-0812">Transmembrane</keyword>
<keyword id="KW-1133">Transmembrane helix</keyword>
<keyword id="KW-0831">Ubiquinone biosynthesis</keyword>
<proteinExistence type="inferred from homology"/>
<name>UBIA_HERAR</name>
<dbReference type="EC" id="2.5.1.39" evidence="1"/>
<dbReference type="EMBL" id="CU207211">
    <property type="protein sequence ID" value="CAL60526.1"/>
    <property type="molecule type" value="Genomic_DNA"/>
</dbReference>
<dbReference type="SMR" id="A4G1Y9"/>
<dbReference type="STRING" id="204773.HEAR0299"/>
<dbReference type="KEGG" id="har:HEAR0299"/>
<dbReference type="eggNOG" id="COG0382">
    <property type="taxonomic scope" value="Bacteria"/>
</dbReference>
<dbReference type="HOGENOM" id="CLU_034879_1_0_4"/>
<dbReference type="OrthoDB" id="9782418at2"/>
<dbReference type="UniPathway" id="UPA00232"/>
<dbReference type="Proteomes" id="UP000006697">
    <property type="component" value="Chromosome"/>
</dbReference>
<dbReference type="GO" id="GO:0005886">
    <property type="term" value="C:plasma membrane"/>
    <property type="evidence" value="ECO:0007669"/>
    <property type="project" value="UniProtKB-SubCell"/>
</dbReference>
<dbReference type="GO" id="GO:0008412">
    <property type="term" value="F:4-hydroxybenzoate polyprenyltransferase activity"/>
    <property type="evidence" value="ECO:0007669"/>
    <property type="project" value="UniProtKB-UniRule"/>
</dbReference>
<dbReference type="GO" id="GO:0006744">
    <property type="term" value="P:ubiquinone biosynthetic process"/>
    <property type="evidence" value="ECO:0007669"/>
    <property type="project" value="UniProtKB-UniRule"/>
</dbReference>
<dbReference type="CDD" id="cd13959">
    <property type="entry name" value="PT_UbiA_COQ2"/>
    <property type="match status" value="1"/>
</dbReference>
<dbReference type="FunFam" id="1.10.357.140:FF:000002">
    <property type="entry name" value="4-hydroxybenzoate octaprenyltransferase"/>
    <property type="match status" value="1"/>
</dbReference>
<dbReference type="FunFam" id="1.20.120.1780:FF:000001">
    <property type="entry name" value="4-hydroxybenzoate octaprenyltransferase"/>
    <property type="match status" value="1"/>
</dbReference>
<dbReference type="Gene3D" id="1.10.357.140">
    <property type="entry name" value="UbiA prenyltransferase"/>
    <property type="match status" value="1"/>
</dbReference>
<dbReference type="Gene3D" id="1.20.120.1780">
    <property type="entry name" value="UbiA prenyltransferase"/>
    <property type="match status" value="1"/>
</dbReference>
<dbReference type="HAMAP" id="MF_01635">
    <property type="entry name" value="UbiA"/>
    <property type="match status" value="1"/>
</dbReference>
<dbReference type="InterPro" id="IPR006370">
    <property type="entry name" value="HB_polyprenyltransferase-like"/>
</dbReference>
<dbReference type="InterPro" id="IPR039653">
    <property type="entry name" value="Prenyltransferase"/>
</dbReference>
<dbReference type="InterPro" id="IPR000537">
    <property type="entry name" value="UbiA_prenyltransferase"/>
</dbReference>
<dbReference type="InterPro" id="IPR030470">
    <property type="entry name" value="UbiA_prenylTrfase_CS"/>
</dbReference>
<dbReference type="InterPro" id="IPR044878">
    <property type="entry name" value="UbiA_sf"/>
</dbReference>
<dbReference type="NCBIfam" id="TIGR01474">
    <property type="entry name" value="ubiA_proteo"/>
    <property type="match status" value="1"/>
</dbReference>
<dbReference type="PANTHER" id="PTHR11048:SF28">
    <property type="entry name" value="4-HYDROXYBENZOATE POLYPRENYLTRANSFERASE, MITOCHONDRIAL"/>
    <property type="match status" value="1"/>
</dbReference>
<dbReference type="PANTHER" id="PTHR11048">
    <property type="entry name" value="PRENYLTRANSFERASES"/>
    <property type="match status" value="1"/>
</dbReference>
<dbReference type="Pfam" id="PF01040">
    <property type="entry name" value="UbiA"/>
    <property type="match status" value="1"/>
</dbReference>
<dbReference type="PROSITE" id="PS00943">
    <property type="entry name" value="UBIA"/>
    <property type="match status" value="1"/>
</dbReference>
<feature type="chain" id="PRO_0000336976" description="4-hydroxybenzoate octaprenyltransferase">
    <location>
        <begin position="1"/>
        <end position="284"/>
    </location>
</feature>
<feature type="transmembrane region" description="Helical" evidence="1">
    <location>
        <begin position="16"/>
        <end position="36"/>
    </location>
</feature>
<feature type="transmembrane region" description="Helical" evidence="1">
    <location>
        <begin position="40"/>
        <end position="60"/>
    </location>
</feature>
<feature type="transmembrane region" description="Helical" evidence="1">
    <location>
        <begin position="91"/>
        <end position="111"/>
    </location>
</feature>
<feature type="transmembrane region" description="Helical" evidence="1">
    <location>
        <begin position="132"/>
        <end position="152"/>
    </location>
</feature>
<feature type="transmembrane region" description="Helical" evidence="1">
    <location>
        <begin position="157"/>
        <end position="177"/>
    </location>
</feature>
<feature type="transmembrane region" description="Helical" evidence="1">
    <location>
        <begin position="206"/>
        <end position="226"/>
    </location>
</feature>
<feature type="transmembrane region" description="Helical" evidence="1">
    <location>
        <begin position="231"/>
        <end position="251"/>
    </location>
</feature>
<feature type="transmembrane region" description="Helical" evidence="1">
    <location>
        <begin position="259"/>
        <end position="279"/>
    </location>
</feature>
<gene>
    <name evidence="1" type="primary">ubiA</name>
    <name type="ordered locus">HEAR0299</name>
</gene>